<name>OSC3_AILAL</name>
<dbReference type="EC" id="5.4.99.41" evidence="3"/>
<dbReference type="EMBL" id="ON595697">
    <property type="protein sequence ID" value="UTU07507.1"/>
    <property type="molecule type" value="mRNA"/>
</dbReference>
<dbReference type="SMR" id="P0DXI1"/>
<dbReference type="UniPathway" id="UPA00213"/>
<dbReference type="GO" id="GO:0005811">
    <property type="term" value="C:lipid droplet"/>
    <property type="evidence" value="ECO:0007669"/>
    <property type="project" value="InterPro"/>
</dbReference>
<dbReference type="GO" id="GO:0042300">
    <property type="term" value="F:beta-amyrin synthase activity"/>
    <property type="evidence" value="ECO:0007669"/>
    <property type="project" value="TreeGrafter"/>
</dbReference>
<dbReference type="GO" id="GO:0016104">
    <property type="term" value="P:triterpenoid biosynthetic process"/>
    <property type="evidence" value="ECO:0007669"/>
    <property type="project" value="InterPro"/>
</dbReference>
<dbReference type="CDD" id="cd02892">
    <property type="entry name" value="SQCY_1"/>
    <property type="match status" value="1"/>
</dbReference>
<dbReference type="FunFam" id="1.50.10.20:FF:000044">
    <property type="entry name" value="Lupeol synthase"/>
    <property type="match status" value="1"/>
</dbReference>
<dbReference type="FunFam" id="1.50.10.20:FF:000011">
    <property type="entry name" value="Terpene cyclase/mutase family member"/>
    <property type="match status" value="1"/>
</dbReference>
<dbReference type="Gene3D" id="1.50.10.20">
    <property type="match status" value="2"/>
</dbReference>
<dbReference type="InterPro" id="IPR032696">
    <property type="entry name" value="SQ_cyclase_C"/>
</dbReference>
<dbReference type="InterPro" id="IPR032697">
    <property type="entry name" value="SQ_cyclase_N"/>
</dbReference>
<dbReference type="InterPro" id="IPR018333">
    <property type="entry name" value="Squalene_cyclase"/>
</dbReference>
<dbReference type="InterPro" id="IPR002365">
    <property type="entry name" value="Terpene_synthase_CS"/>
</dbReference>
<dbReference type="InterPro" id="IPR008930">
    <property type="entry name" value="Terpenoid_cyclase/PrenylTrfase"/>
</dbReference>
<dbReference type="NCBIfam" id="TIGR01787">
    <property type="entry name" value="squalene_cyclas"/>
    <property type="match status" value="1"/>
</dbReference>
<dbReference type="PANTHER" id="PTHR11764:SF58">
    <property type="entry name" value="BETA-AMYRIN SYNTHASE-RELATED"/>
    <property type="match status" value="1"/>
</dbReference>
<dbReference type="PANTHER" id="PTHR11764">
    <property type="entry name" value="TERPENE CYCLASE/MUTASE FAMILY MEMBER"/>
    <property type="match status" value="1"/>
</dbReference>
<dbReference type="Pfam" id="PF13243">
    <property type="entry name" value="SQHop_cyclase_C"/>
    <property type="match status" value="1"/>
</dbReference>
<dbReference type="Pfam" id="PF13249">
    <property type="entry name" value="SQHop_cyclase_N"/>
    <property type="match status" value="1"/>
</dbReference>
<dbReference type="SFLD" id="SFLDG01016">
    <property type="entry name" value="Prenyltransferase_Like_2"/>
    <property type="match status" value="1"/>
</dbReference>
<dbReference type="SUPFAM" id="SSF48239">
    <property type="entry name" value="Terpenoid cyclases/Protein prenyltransferases"/>
    <property type="match status" value="2"/>
</dbReference>
<dbReference type="PROSITE" id="PS01074">
    <property type="entry name" value="TERPENE_SYNTHASES"/>
    <property type="match status" value="1"/>
</dbReference>
<feature type="chain" id="PRO_0000461329" description="Lupeol synthase OSC3">
    <location>
        <begin position="1"/>
        <end position="774"/>
    </location>
</feature>
<feature type="repeat" description="PFTB 1" evidence="2">
    <location>
        <begin position="111"/>
        <end position="156"/>
    </location>
</feature>
<feature type="repeat" description="PFTB 2" evidence="2">
    <location>
        <begin position="161"/>
        <end position="202"/>
    </location>
</feature>
<feature type="repeat" description="PFTB 3" evidence="2">
    <location>
        <begin position="209"/>
        <end position="252"/>
    </location>
</feature>
<feature type="repeat" description="PFTB 4" evidence="2">
    <location>
        <begin position="466"/>
        <end position="514"/>
    </location>
</feature>
<feature type="repeat" description="PFTB 5" evidence="2">
    <location>
        <begin position="526"/>
        <end position="568"/>
    </location>
</feature>
<feature type="repeat" description="PFTB 6" evidence="2">
    <location>
        <begin position="603"/>
        <end position="643"/>
    </location>
</feature>
<feature type="repeat" description="PFTB 7" evidence="2">
    <location>
        <begin position="652"/>
        <end position="693"/>
    </location>
</feature>
<feature type="repeat" description="PFTB 8" evidence="2">
    <location>
        <begin position="714"/>
        <end position="755"/>
    </location>
</feature>
<feature type="active site" description="Proton donor" evidence="1">
    <location>
        <position position="497"/>
    </location>
</feature>
<organism>
    <name type="scientific">Ailanthus altissima</name>
    <name type="common">Tree-of-heaven</name>
    <name type="synonym">Toxicodendron altissimum</name>
    <dbReference type="NCBI Taxonomy" id="2768810"/>
    <lineage>
        <taxon>Eukaryota</taxon>
        <taxon>Viridiplantae</taxon>
        <taxon>Streptophyta</taxon>
        <taxon>Embryophyta</taxon>
        <taxon>Tracheophyta</taxon>
        <taxon>Spermatophyta</taxon>
        <taxon>Magnoliopsida</taxon>
        <taxon>eudicotyledons</taxon>
        <taxon>Gunneridae</taxon>
        <taxon>Pentapetalae</taxon>
        <taxon>rosids</taxon>
        <taxon>malvids</taxon>
        <taxon>Sapindales</taxon>
        <taxon>Simaroubaceae</taxon>
        <taxon>Ailanthus</taxon>
    </lineage>
</organism>
<evidence type="ECO:0000250" key="1">
    <source>
        <dbReference type="UniProtKB" id="P48449"/>
    </source>
</evidence>
<evidence type="ECO:0000255" key="2"/>
<evidence type="ECO:0000269" key="3">
    <source>
    </source>
</evidence>
<evidence type="ECO:0000303" key="4">
    <source>
    </source>
</evidence>
<evidence type="ECO:0000305" key="5"/>
<accession>P0DXI1</accession>
<comment type="function">
    <text evidence="3">Oxidosqualene cyclase catalyzing the conversion of 2,3-oxidosqualene (2,3-epoxysqualene) to lupeol, a pentacyclic triterpenoid with anti-inflammatory properties.</text>
</comment>
<comment type="catalytic activity">
    <reaction evidence="3">
        <text>(S)-2,3-epoxysqualene = lupeol</text>
        <dbReference type="Rhea" id="RHEA:31383"/>
        <dbReference type="ChEBI" id="CHEBI:6570"/>
        <dbReference type="ChEBI" id="CHEBI:15441"/>
        <dbReference type="EC" id="5.4.99.41"/>
    </reaction>
    <physiologicalReaction direction="left-to-right" evidence="3">
        <dbReference type="Rhea" id="RHEA:31384"/>
    </physiologicalReaction>
</comment>
<comment type="pathway">
    <text evidence="3">Secondary metabolite biosynthesis; terpenoid biosynthesis.</text>
</comment>
<comment type="tissue specificity">
    <text evidence="3">Mainly expressed in bark and young petioles and, to a lower extent, in stems and young leaves.</text>
</comment>
<comment type="similarity">
    <text evidence="5">Belongs to the terpene cyclase/mutase family.</text>
</comment>
<proteinExistence type="evidence at protein level"/>
<reference key="1">
    <citation type="journal article" date="2022" name="Front. Plant Sci.">
        <title>Identification of early quassinoid biosynthesis in the invasive tree of heaven (Ailanthus altissima) confirms evolutionary origin from protolimonoids.</title>
        <authorList>
            <person name="Chuang L."/>
            <person name="Liu S."/>
            <person name="Biedermann D."/>
            <person name="Franke J."/>
        </authorList>
    </citation>
    <scope>NUCLEOTIDE SEQUENCE [MRNA]</scope>
    <scope>FUNCTION</scope>
    <scope>CATALYTIC ACTIVITY</scope>
    <scope>PATHWAY</scope>
    <scope>TISSUE SPECIFICITY</scope>
</reference>
<protein>
    <recommendedName>
        <fullName evidence="4">Lupeol synthase OSC3</fullName>
        <ecNumber evidence="3">5.4.99.41</ecNumber>
    </recommendedName>
    <alternativeName>
        <fullName evidence="4">Oxidosqualene cyclase 3</fullName>
        <shortName evidence="4">AaOSC3</shortName>
    </alternativeName>
</protein>
<keyword id="KW-0413">Isomerase</keyword>
<keyword id="KW-0677">Repeat</keyword>
<gene>
    <name evidence="4" type="primary">OSC3</name>
</gene>
<sequence length="774" mass="89343">MYLKERKEVKKMWRLKIGEGRGDNNPYLRSTNNFVGRQTWEFDPNAGTPEERAEVEEARQNFYRNRFRIRPGSDLIWRMQFLREKKFIQKIPPLKVQDGEEITYEVATAALKRAVHYLSALQSKDGHWPADNSGPLFYHPPFVMCLYITGYLSILFSAEHRKEMLRYIYYHQNEDGGWGLYVGGHSTMFCTAFNYVCMRLLGEGPDGGENNACEKSRKWILDHGGLTAIPSWGKTWLSILGVYDWSGCNPMPPEFWSFPSFLPIHPAKMLNYCRLTYMPMSYLYGKRFVGPITPLILQLREELYTQTYNEINWSKTRHLCAKEDLYYPHTLIQKLLWDSLYYTTEPLLTCWPFKKLRGNSLQVTMHHIHYEDEASQYITIGCVEKPLFMLACWIEDPNGDCFKKHLARIHDYLWLGEDGMRIHSFGSQTWDCVFAIQSLLASNLINEIGAILMKGHEFIKNSQVSNNPPGDFRKMFRHISKGGWTFSDQDHGWKVSDCTAEGLYCCLYMSTMSPEVVGEKMEPERLYDAVNILLSMQSKNGGVSAWEPAGAQSWLEMLNPVEFLSDLIIEYEYPECTASAIKALSLFQKLCPEHRKNEIEKFLSKAVKFLEDSQFPDGSWYGHWGICFIYGTWYALKGLAVAGKTYSDCLAMRKGADFLLKTQAHDGGWGESHLSCPNKKYIPLEGNRSNLVQTSWAMMGLIHSGQMERDPTPLHRAAKLLINSQLENGDFPQQELTASFMVNCMIQFAMYRSTFPLWALAEYRSKVPFPSSKF</sequence>